<dbReference type="PIR" id="B27760">
    <property type="entry name" value="LBRFAS"/>
</dbReference>
<dbReference type="PDB" id="1DX7">
    <property type="method" value="NMR"/>
    <property type="chains" value="A=2-49"/>
</dbReference>
<dbReference type="PDB" id="1JO5">
    <property type="method" value="NMR"/>
    <property type="chains" value="A=2-49"/>
</dbReference>
<dbReference type="PDBsum" id="1DX7"/>
<dbReference type="PDBsum" id="1JO5"/>
<dbReference type="BMRB" id="P0C0Y1"/>
<dbReference type="SMR" id="P0C0Y1"/>
<dbReference type="EvolutionaryTrace" id="P0C0Y1"/>
<dbReference type="GO" id="GO:0005886">
    <property type="term" value="C:plasma membrane"/>
    <property type="evidence" value="ECO:0007669"/>
    <property type="project" value="UniProtKB-SubCell"/>
</dbReference>
<dbReference type="GO" id="GO:0030077">
    <property type="term" value="C:plasma membrane light-harvesting complex"/>
    <property type="evidence" value="ECO:0007669"/>
    <property type="project" value="InterPro"/>
</dbReference>
<dbReference type="GO" id="GO:0042314">
    <property type="term" value="F:bacteriochlorophyll binding"/>
    <property type="evidence" value="ECO:0007669"/>
    <property type="project" value="UniProtKB-KW"/>
</dbReference>
<dbReference type="GO" id="GO:0045156">
    <property type="term" value="F:electron transporter, transferring electrons within the cyclic electron transport pathway of photosynthesis activity"/>
    <property type="evidence" value="ECO:0007669"/>
    <property type="project" value="InterPro"/>
</dbReference>
<dbReference type="GO" id="GO:0046872">
    <property type="term" value="F:metal ion binding"/>
    <property type="evidence" value="ECO:0007669"/>
    <property type="project" value="UniProtKB-KW"/>
</dbReference>
<dbReference type="GO" id="GO:0019684">
    <property type="term" value="P:photosynthesis, light reaction"/>
    <property type="evidence" value="ECO:0007669"/>
    <property type="project" value="InterPro"/>
</dbReference>
<dbReference type="DisProt" id="DP01572"/>
<dbReference type="Gene3D" id="1.20.5.250">
    <property type="match status" value="1"/>
</dbReference>
<dbReference type="InterPro" id="IPR000066">
    <property type="entry name" value="Antenna_a/b"/>
</dbReference>
<dbReference type="InterPro" id="IPR023623">
    <property type="entry name" value="Antenna_beta_CS"/>
</dbReference>
<dbReference type="InterPro" id="IPR023624">
    <property type="entry name" value="Antenna_beta_dom_sf"/>
</dbReference>
<dbReference type="InterPro" id="IPR002362">
    <property type="entry name" value="LHB-1/5"/>
</dbReference>
<dbReference type="InterPro" id="IPR035889">
    <property type="entry name" value="Light-harvesting_complex"/>
</dbReference>
<dbReference type="NCBIfam" id="NF040862">
    <property type="entry name" value="pufB_517_ASD"/>
    <property type="match status" value="1"/>
</dbReference>
<dbReference type="Pfam" id="PF00556">
    <property type="entry name" value="LHC"/>
    <property type="match status" value="1"/>
</dbReference>
<dbReference type="PIRSF" id="PIRSF002900">
    <property type="entry name" value="Antenna_beta"/>
    <property type="match status" value="1"/>
</dbReference>
<dbReference type="PRINTS" id="PR00674">
    <property type="entry name" value="LIGHTHARVSTB"/>
</dbReference>
<dbReference type="SUPFAM" id="SSF56918">
    <property type="entry name" value="Light-harvesting complex subunits"/>
    <property type="match status" value="1"/>
</dbReference>
<dbReference type="PROSITE" id="PS00969">
    <property type="entry name" value="ANTENNA_COMP_BETA"/>
    <property type="match status" value="1"/>
</dbReference>
<evidence type="ECO:0000269" key="1">
    <source>
    </source>
</evidence>
<evidence type="ECO:0000305" key="2"/>
<evidence type="ECO:0007829" key="3">
    <source>
        <dbReference type="PDB" id="1DX7"/>
    </source>
</evidence>
<evidence type="ECO:0007829" key="4">
    <source>
        <dbReference type="PDB" id="1JO5"/>
    </source>
</evidence>
<protein>
    <recommendedName>
        <fullName>Light-harvesting protein B-875 beta chain</fullName>
    </recommendedName>
    <alternativeName>
        <fullName>Antenna pigment protein beta chain</fullName>
    </alternativeName>
    <alternativeName>
        <fullName>LH-3A</fullName>
    </alternativeName>
</protein>
<keyword id="KW-0002">3D-structure</keyword>
<keyword id="KW-0042">Antenna complex</keyword>
<keyword id="KW-0076">Bacteriochlorophyll</keyword>
<keyword id="KW-0997">Cell inner membrane</keyword>
<keyword id="KW-1003">Cell membrane</keyword>
<keyword id="KW-0148">Chlorophyll</keyword>
<keyword id="KW-0157">Chromophore</keyword>
<keyword id="KW-0903">Direct protein sequencing</keyword>
<keyword id="KW-0437">Light-harvesting polypeptide</keyword>
<keyword id="KW-0460">Magnesium</keyword>
<keyword id="KW-0472">Membrane</keyword>
<keyword id="KW-0479">Metal-binding</keyword>
<keyword id="KW-0735">Signal-anchor</keyword>
<keyword id="KW-0812">Transmembrane</keyword>
<keyword id="KW-1133">Transmembrane helix</keyword>
<reference key="1">
    <citation type="journal article" date="1984" name="Hoppe-Seyler's Z. Physiol. Chem.">
        <title>The light-harvesting polypeptides of Rhodopseudomonas sphaeroides R-26.1. I. Isolation, purification and sequence analyses.</title>
        <authorList>
            <person name="Theiler R."/>
            <person name="Suter F."/>
            <person name="Wiemken V."/>
            <person name="Zuber H."/>
        </authorList>
    </citation>
    <scope>PROTEIN SEQUENCE OF 2-49</scope>
    <source>
        <strain>R-26.1</strain>
    </source>
</reference>
<reference key="2">
    <citation type="journal article" date="2000" name="J. Mol. Biol.">
        <title>The solution structure of Rhodobacter sphaeroides LH1beta reveals two helical domains separated by a more flexible region: structural consequences for the LH1 complex.</title>
        <authorList>
            <person name="Conroy M.J."/>
            <person name="Westerhuis W.H.J."/>
            <person name="Parkes-Loach P.S."/>
            <person name="Loach P.A."/>
            <person name="Hunter C.N."/>
            <person name="Williamson M.P."/>
        </authorList>
    </citation>
    <scope>STRUCTURE BY NMR</scope>
    <source>
        <strain>DD13</strain>
    </source>
</reference>
<proteinExistence type="evidence at protein level"/>
<name>LHB1_CERSP</name>
<organism>
    <name type="scientific">Cereibacter sphaeroides</name>
    <name type="common">Rhodobacter sphaeroides</name>
    <dbReference type="NCBI Taxonomy" id="1063"/>
    <lineage>
        <taxon>Bacteria</taxon>
        <taxon>Pseudomonadati</taxon>
        <taxon>Pseudomonadota</taxon>
        <taxon>Alphaproteobacteria</taxon>
        <taxon>Rhodobacterales</taxon>
        <taxon>Paracoccaceae</taxon>
        <taxon>Cereibacter</taxon>
    </lineage>
</organism>
<feature type="initiator methionine" description="Removed" evidence="1">
    <location>
        <position position="1"/>
    </location>
</feature>
<feature type="chain" id="PRO_0000099833" description="Light-harvesting protein B-875 beta chain">
    <location>
        <begin position="2"/>
        <end position="49"/>
    </location>
</feature>
<feature type="topological domain" description="Cytoplasmic">
    <location>
        <begin position="2"/>
        <end position="27"/>
    </location>
</feature>
<feature type="transmembrane region" description="Helical; Signal-anchor for type II membrane protein">
    <location>
        <begin position="28"/>
        <end position="45"/>
    </location>
</feature>
<feature type="topological domain" description="Periplasmic">
    <location>
        <begin position="46"/>
        <end position="49"/>
    </location>
</feature>
<feature type="binding site" description="axial binding residue">
    <location>
        <position position="21"/>
    </location>
    <ligand>
        <name>a bacteriochlorophyll</name>
        <dbReference type="ChEBI" id="CHEBI:38201"/>
    </ligand>
    <ligandPart>
        <name>Mg</name>
        <dbReference type="ChEBI" id="CHEBI:25107"/>
    </ligandPart>
</feature>
<feature type="binding site" description="axial binding residue">
    <location>
        <position position="39"/>
    </location>
    <ligand>
        <name>a bacteriochlorophyll</name>
        <dbReference type="ChEBI" id="CHEBI:38201"/>
    </ligand>
    <ligandPart>
        <name>Mg</name>
        <dbReference type="ChEBI" id="CHEBI:25107"/>
    </ligandPart>
</feature>
<feature type="helix" evidence="3">
    <location>
        <begin position="5"/>
        <end position="8"/>
    </location>
</feature>
<feature type="helix" evidence="3">
    <location>
        <begin position="9"/>
        <end position="20"/>
    </location>
</feature>
<feature type="helix" evidence="3">
    <location>
        <begin position="22"/>
        <end position="31"/>
    </location>
</feature>
<feature type="helix" evidence="3">
    <location>
        <begin position="34"/>
        <end position="44"/>
    </location>
</feature>
<feature type="turn" evidence="4">
    <location>
        <begin position="46"/>
        <end position="48"/>
    </location>
</feature>
<accession>P0C0Y1</accession>
<accession>P02951</accession>
<comment type="function">
    <text>Antenna complexes are light-harvesting systems, which transfer the excitation energy to the reaction centers.</text>
</comment>
<comment type="subunit">
    <text>The core complex is formed by different alpha and beta chains, binding bacteriochlorophyll molecules, and arranged most probably in tetrameric structures disposed around the reaction center. The non-pigmented gamma chains may constitute additional components.</text>
</comment>
<comment type="subcellular location">
    <subcellularLocation>
        <location>Cell inner membrane</location>
        <topology>Single-pass type II membrane protein</topology>
    </subcellularLocation>
</comment>
<comment type="similarity">
    <text evidence="2">Belongs to the antenna complex beta subunit family.</text>
</comment>
<sequence length="49" mass="5572">MADKSDLGYTGLTDEQAQELHSVYMSGLWPFSAVAIVAHLAVYIWRPWF</sequence>
<gene>
    <name type="primary">pufB</name>
</gene>